<dbReference type="EMBL" id="AF019213">
    <property type="protein sequence ID" value="AAC33160.1"/>
    <property type="molecule type" value="Genomic_DNA"/>
</dbReference>
<dbReference type="EMBL" id="AE003852">
    <property type="protein sequence ID" value="AAF95333.1"/>
    <property type="molecule type" value="Genomic_DNA"/>
</dbReference>
<dbReference type="PIR" id="G82107">
    <property type="entry name" value="G82107"/>
</dbReference>
<dbReference type="RefSeq" id="NP_231819.1">
    <property type="nucleotide sequence ID" value="NC_002505.1"/>
</dbReference>
<dbReference type="RefSeq" id="WP_000154827.1">
    <property type="nucleotide sequence ID" value="NZ_LT906614.1"/>
</dbReference>
<dbReference type="SMR" id="P0C6C3"/>
<dbReference type="STRING" id="243277.VC_2188"/>
<dbReference type="DNASU" id="2613228"/>
<dbReference type="EnsemblBacteria" id="AAF95333">
    <property type="protein sequence ID" value="AAF95333"/>
    <property type="gene ID" value="VC_2188"/>
</dbReference>
<dbReference type="KEGG" id="vch:VC_2188"/>
<dbReference type="PATRIC" id="fig|243277.26.peg.2086"/>
<dbReference type="eggNOG" id="COG1344">
    <property type="taxonomic scope" value="Bacteria"/>
</dbReference>
<dbReference type="HOGENOM" id="CLU_011142_7_1_6"/>
<dbReference type="Proteomes" id="UP000000584">
    <property type="component" value="Chromosome 1"/>
</dbReference>
<dbReference type="GO" id="GO:0009288">
    <property type="term" value="C:bacterial-type flagellum"/>
    <property type="evidence" value="ECO:0007669"/>
    <property type="project" value="UniProtKB-SubCell"/>
</dbReference>
<dbReference type="GO" id="GO:0005576">
    <property type="term" value="C:extracellular region"/>
    <property type="evidence" value="ECO:0007669"/>
    <property type="project" value="UniProtKB-SubCell"/>
</dbReference>
<dbReference type="GO" id="GO:0005198">
    <property type="term" value="F:structural molecule activity"/>
    <property type="evidence" value="ECO:0007669"/>
    <property type="project" value="InterPro"/>
</dbReference>
<dbReference type="Gene3D" id="2.60.40.4390">
    <property type="match status" value="1"/>
</dbReference>
<dbReference type="Gene3D" id="6.10.280.190">
    <property type="match status" value="1"/>
</dbReference>
<dbReference type="Gene3D" id="1.20.1330.10">
    <property type="entry name" value="f41 fragment of flagellin, N-terminal domain"/>
    <property type="match status" value="1"/>
</dbReference>
<dbReference type="Gene3D" id="6.10.10.10">
    <property type="entry name" value="Flagellar export chaperone, C-terminal domain"/>
    <property type="match status" value="1"/>
</dbReference>
<dbReference type="InterPro" id="IPR001492">
    <property type="entry name" value="Flagellin"/>
</dbReference>
<dbReference type="InterPro" id="IPR046358">
    <property type="entry name" value="Flagellin_C"/>
</dbReference>
<dbReference type="InterPro" id="IPR042187">
    <property type="entry name" value="Flagellin_C_sub2"/>
</dbReference>
<dbReference type="InterPro" id="IPR010810">
    <property type="entry name" value="Flagellin_hook_IN_motif"/>
</dbReference>
<dbReference type="InterPro" id="IPR001029">
    <property type="entry name" value="Flagellin_N"/>
</dbReference>
<dbReference type="NCBIfam" id="NF006466">
    <property type="entry name" value="PRK08869.1-1"/>
    <property type="match status" value="1"/>
</dbReference>
<dbReference type="NCBIfam" id="NF006468">
    <property type="entry name" value="PRK08869.1-3"/>
    <property type="match status" value="1"/>
</dbReference>
<dbReference type="PANTHER" id="PTHR42792">
    <property type="entry name" value="FLAGELLIN"/>
    <property type="match status" value="1"/>
</dbReference>
<dbReference type="PANTHER" id="PTHR42792:SF2">
    <property type="entry name" value="FLAGELLIN"/>
    <property type="match status" value="1"/>
</dbReference>
<dbReference type="Pfam" id="PF00700">
    <property type="entry name" value="Flagellin_C"/>
    <property type="match status" value="1"/>
</dbReference>
<dbReference type="Pfam" id="PF07196">
    <property type="entry name" value="Flagellin_IN"/>
    <property type="match status" value="1"/>
</dbReference>
<dbReference type="Pfam" id="PF00669">
    <property type="entry name" value="Flagellin_N"/>
    <property type="match status" value="1"/>
</dbReference>
<dbReference type="PRINTS" id="PR00207">
    <property type="entry name" value="FLAGELLIN"/>
</dbReference>
<dbReference type="SUPFAM" id="SSF64518">
    <property type="entry name" value="Phase 1 flagellin"/>
    <property type="match status" value="1"/>
</dbReference>
<accession>P0C6C3</accession>
<accession>O30858</accession>
<accession>O34220</accession>
<comment type="function">
    <text>Flagellin is the subunit protein which polymerizes to form the filaments of bacterial flagella. FlaA is required to form a core or scaffold into which the other flagellins are inserted to provide structural integrity. Essential for flagellar synthesis and motility; important for full virulence.</text>
</comment>
<comment type="subunit">
    <text>Heteromer of multiple flagellin subunits including FlaA, FlaB, FlaC, FlaD and FlaE.</text>
</comment>
<comment type="subcellular location">
    <subcellularLocation>
        <location>Secreted</location>
    </subcellularLocation>
    <subcellularLocation>
        <location>Bacterial flagellum</location>
    </subcellularLocation>
</comment>
<comment type="miscellaneous">
    <text>V.cholerae is able to differentially regulate the flagellins within the flagellum maybe to produce flagella which are particularly suited for motility within a given environment. A flagellar filament composed exclusively of FlaA is fragile and easily broken.</text>
</comment>
<comment type="similarity">
    <text evidence="2">Belongs to the bacterial flagellin family.</text>
</comment>
<reference key="1">
    <citation type="journal article" date="1998" name="FEMS Microbiol. Lett.">
        <title>Cloning, sequencing and expression of the flagellin core protein and other genes encoding structural proteins of the Vibrio cholerae flagellum.</title>
        <authorList>
            <person name="Das M."/>
            <person name="Chopra A.K."/>
            <person name="Wood T."/>
            <person name="Peterson J.W."/>
        </authorList>
    </citation>
    <scope>NUCLEOTIDE SEQUENCE [GENOMIC DNA]</scope>
    <source>
        <strain>El Tor Inaba V86</strain>
    </source>
</reference>
<reference key="2">
    <citation type="journal article" date="2000" name="Nature">
        <title>DNA sequence of both chromosomes of the cholera pathogen Vibrio cholerae.</title>
        <authorList>
            <person name="Heidelberg J.F."/>
            <person name="Eisen J.A."/>
            <person name="Nelson W.C."/>
            <person name="Clayton R.A."/>
            <person name="Gwinn M.L."/>
            <person name="Dodson R.J."/>
            <person name="Haft D.H."/>
            <person name="Hickey E.K."/>
            <person name="Peterson J.D."/>
            <person name="Umayam L.A."/>
            <person name="Gill S.R."/>
            <person name="Nelson K.E."/>
            <person name="Read T.D."/>
            <person name="Tettelin H."/>
            <person name="Richardson D.L."/>
            <person name="Ermolaeva M.D."/>
            <person name="Vamathevan J.J."/>
            <person name="Bass S."/>
            <person name="Qin H."/>
            <person name="Dragoi I."/>
            <person name="Sellers P."/>
            <person name="McDonald L.A."/>
            <person name="Utterback T.R."/>
            <person name="Fleischmann R.D."/>
            <person name="Nierman W.C."/>
            <person name="White O."/>
            <person name="Salzberg S.L."/>
            <person name="Smith H.O."/>
            <person name="Colwell R.R."/>
            <person name="Mekalanos J.J."/>
            <person name="Venter J.C."/>
            <person name="Fraser C.M."/>
        </authorList>
    </citation>
    <scope>NUCLEOTIDE SEQUENCE [LARGE SCALE GENOMIC DNA]</scope>
    <source>
        <strain>ATCC 39315 / El Tor Inaba N16961</strain>
    </source>
</reference>
<evidence type="ECO:0000255" key="1"/>
<evidence type="ECO:0000305" key="2"/>
<sequence length="379" mass="40383">MTINVNTNVSAMTAQRYLTKATGELNTSMERLSSGNRINSAKDDAAGLQISNRLTAQSRGLDVAMRNANDGISIAQTAEGAMNESTSILQRMRDLALQSANGTNSASERQALNEESVALQDELNRIAETTSFGGRKLLNGSFGEASFQIGSSSGEAIIMGLTSVRADDFRMGGQSFIAEQPKTKEWGVPPTARDLKFEFTKKDGEAVVLDIIAKDGDDIEELATYINGQTDLFKASVDQEGKLQIFVAEPNIEGNFNISGGLATELGLNGGPGVKTTVQDIDITSVGGSQNAVGIIDAALKYVDSQRADLGAKQNRLSHSISNLSNIQENVEASKSRIKDTDFAKETTQLTKSQILQQAGTSILAQAKQLPNSAISLLQ</sequence>
<keyword id="KW-0975">Bacterial flagellum</keyword>
<keyword id="KW-0175">Coiled coil</keyword>
<keyword id="KW-1185">Reference proteome</keyword>
<keyword id="KW-0964">Secreted</keyword>
<keyword id="KW-0843">Virulence</keyword>
<organism>
    <name type="scientific">Vibrio cholerae serotype O1 (strain ATCC 39315 / El Tor Inaba N16961)</name>
    <dbReference type="NCBI Taxonomy" id="243277"/>
    <lineage>
        <taxon>Bacteria</taxon>
        <taxon>Pseudomonadati</taxon>
        <taxon>Pseudomonadota</taxon>
        <taxon>Gammaproteobacteria</taxon>
        <taxon>Vibrionales</taxon>
        <taxon>Vibrionaceae</taxon>
        <taxon>Vibrio</taxon>
    </lineage>
</organism>
<gene>
    <name type="primary">flaA</name>
    <name type="ordered locus">VC_2188</name>
</gene>
<protein>
    <recommendedName>
        <fullName>Flagellin A</fullName>
    </recommendedName>
    <alternativeName>
        <fullName>Flagellin core protein</fullName>
    </alternativeName>
</protein>
<name>FLAA_VIBCH</name>
<proteinExistence type="inferred from homology"/>
<feature type="chain" id="PRO_0000182648" description="Flagellin A">
    <location>
        <begin position="1"/>
        <end position="379"/>
    </location>
</feature>
<feature type="coiled-coil region" evidence="1">
    <location>
        <begin position="104"/>
        <end position="129"/>
    </location>
</feature>
<feature type="coiled-coil region" evidence="1">
    <location>
        <begin position="314"/>
        <end position="341"/>
    </location>
</feature>